<keyword id="KW-0274">FAD</keyword>
<keyword id="KW-0285">Flavoprotein</keyword>
<keyword id="KW-0521">NADP</keyword>
<keyword id="KW-0560">Oxidoreductase</keyword>
<evidence type="ECO:0000255" key="1">
    <source>
        <dbReference type="HAMAP-Rule" id="MF_01685"/>
    </source>
</evidence>
<protein>
    <recommendedName>
        <fullName evidence="1">Ferredoxin--NADP reductase</fullName>
        <shortName evidence="1">FNR</shortName>
        <shortName evidence="1">Fd-NADP(+) reductase</shortName>
        <ecNumber evidence="1">1.18.1.2</ecNumber>
    </recommendedName>
</protein>
<gene>
    <name type="ordered locus">STER_1382</name>
</gene>
<dbReference type="EC" id="1.18.1.2" evidence="1"/>
<dbReference type="EMBL" id="CP000419">
    <property type="protein sequence ID" value="ABJ66550.1"/>
    <property type="molecule type" value="Genomic_DNA"/>
</dbReference>
<dbReference type="RefSeq" id="WP_011226284.1">
    <property type="nucleotide sequence ID" value="NC_008532.1"/>
</dbReference>
<dbReference type="SMR" id="Q03JS2"/>
<dbReference type="KEGG" id="ste:STER_1382"/>
<dbReference type="PATRIC" id="fig|264199.4.peg.1392"/>
<dbReference type="HOGENOM" id="CLU_031864_5_5_9"/>
<dbReference type="GO" id="GO:0004324">
    <property type="term" value="F:ferredoxin-NADP+ reductase activity"/>
    <property type="evidence" value="ECO:0007669"/>
    <property type="project" value="UniProtKB-UniRule"/>
</dbReference>
<dbReference type="GO" id="GO:0050660">
    <property type="term" value="F:flavin adenine dinucleotide binding"/>
    <property type="evidence" value="ECO:0007669"/>
    <property type="project" value="UniProtKB-UniRule"/>
</dbReference>
<dbReference type="GO" id="GO:0050661">
    <property type="term" value="F:NADP binding"/>
    <property type="evidence" value="ECO:0007669"/>
    <property type="project" value="UniProtKB-UniRule"/>
</dbReference>
<dbReference type="Gene3D" id="3.50.50.60">
    <property type="entry name" value="FAD/NAD(P)-binding domain"/>
    <property type="match status" value="2"/>
</dbReference>
<dbReference type="HAMAP" id="MF_01685">
    <property type="entry name" value="FENR2"/>
    <property type="match status" value="1"/>
</dbReference>
<dbReference type="InterPro" id="IPR036188">
    <property type="entry name" value="FAD/NAD-bd_sf"/>
</dbReference>
<dbReference type="InterPro" id="IPR023753">
    <property type="entry name" value="FAD/NAD-binding_dom"/>
</dbReference>
<dbReference type="InterPro" id="IPR022890">
    <property type="entry name" value="Fd--NADP_Rdtase_type_2"/>
</dbReference>
<dbReference type="InterPro" id="IPR050097">
    <property type="entry name" value="Ferredoxin-NADP_redctase_2"/>
</dbReference>
<dbReference type="PANTHER" id="PTHR48105">
    <property type="entry name" value="THIOREDOXIN REDUCTASE 1-RELATED-RELATED"/>
    <property type="match status" value="1"/>
</dbReference>
<dbReference type="Pfam" id="PF07992">
    <property type="entry name" value="Pyr_redox_2"/>
    <property type="match status" value="1"/>
</dbReference>
<dbReference type="PRINTS" id="PR00368">
    <property type="entry name" value="FADPNR"/>
</dbReference>
<dbReference type="PRINTS" id="PR00469">
    <property type="entry name" value="PNDRDTASEII"/>
</dbReference>
<dbReference type="SUPFAM" id="SSF51905">
    <property type="entry name" value="FAD/NAD(P)-binding domain"/>
    <property type="match status" value="1"/>
</dbReference>
<reference key="1">
    <citation type="journal article" date="2006" name="Proc. Natl. Acad. Sci. U.S.A.">
        <title>Comparative genomics of the lactic acid bacteria.</title>
        <authorList>
            <person name="Makarova K.S."/>
            <person name="Slesarev A."/>
            <person name="Wolf Y.I."/>
            <person name="Sorokin A."/>
            <person name="Mirkin B."/>
            <person name="Koonin E.V."/>
            <person name="Pavlov A."/>
            <person name="Pavlova N."/>
            <person name="Karamychev V."/>
            <person name="Polouchine N."/>
            <person name="Shakhova V."/>
            <person name="Grigoriev I."/>
            <person name="Lou Y."/>
            <person name="Rohksar D."/>
            <person name="Lucas S."/>
            <person name="Huang K."/>
            <person name="Goodstein D.M."/>
            <person name="Hawkins T."/>
            <person name="Plengvidhya V."/>
            <person name="Welker D."/>
            <person name="Hughes J."/>
            <person name="Goh Y."/>
            <person name="Benson A."/>
            <person name="Baldwin K."/>
            <person name="Lee J.-H."/>
            <person name="Diaz-Muniz I."/>
            <person name="Dosti B."/>
            <person name="Smeianov V."/>
            <person name="Wechter W."/>
            <person name="Barabote R."/>
            <person name="Lorca G."/>
            <person name="Altermann E."/>
            <person name="Barrangou R."/>
            <person name="Ganesan B."/>
            <person name="Xie Y."/>
            <person name="Rawsthorne H."/>
            <person name="Tamir D."/>
            <person name="Parker C."/>
            <person name="Breidt F."/>
            <person name="Broadbent J.R."/>
            <person name="Hutkins R."/>
            <person name="O'Sullivan D."/>
            <person name="Steele J."/>
            <person name="Unlu G."/>
            <person name="Saier M.H. Jr."/>
            <person name="Klaenhammer T."/>
            <person name="Richardson P."/>
            <person name="Kozyavkin S."/>
            <person name="Weimer B.C."/>
            <person name="Mills D.A."/>
        </authorList>
    </citation>
    <scope>NUCLEOTIDE SEQUENCE [LARGE SCALE GENOMIC DNA]</scope>
    <source>
        <strain>ATCC BAA-491 / LMD-9</strain>
    </source>
</reference>
<comment type="catalytic activity">
    <reaction evidence="1">
        <text>2 reduced [2Fe-2S]-[ferredoxin] + NADP(+) + H(+) = 2 oxidized [2Fe-2S]-[ferredoxin] + NADPH</text>
        <dbReference type="Rhea" id="RHEA:20125"/>
        <dbReference type="Rhea" id="RHEA-COMP:10000"/>
        <dbReference type="Rhea" id="RHEA-COMP:10001"/>
        <dbReference type="ChEBI" id="CHEBI:15378"/>
        <dbReference type="ChEBI" id="CHEBI:33737"/>
        <dbReference type="ChEBI" id="CHEBI:33738"/>
        <dbReference type="ChEBI" id="CHEBI:57783"/>
        <dbReference type="ChEBI" id="CHEBI:58349"/>
        <dbReference type="EC" id="1.18.1.2"/>
    </reaction>
</comment>
<comment type="cofactor">
    <cofactor evidence="1">
        <name>FAD</name>
        <dbReference type="ChEBI" id="CHEBI:57692"/>
    </cofactor>
    <text evidence="1">Binds 1 FAD per subunit.</text>
</comment>
<comment type="subunit">
    <text evidence="1">Homodimer.</text>
</comment>
<comment type="similarity">
    <text evidence="1">Belongs to the ferredoxin--NADP reductase type 2 family.</text>
</comment>
<name>FENR_STRTD</name>
<sequence>MAEEKIYDITIIGGGPVGLWAAFYAGLRGMTVNIIESLSELGGQPAILYPEKKIYDIPAFPQTTGAELIENLLIQLKRFEDRVSIHLKEEVQTFKKTDGIFTIATSKGQHLSKAIVIACGNGAFAPRPLGVDNEEDFANNNLLYNVHSLDQFAGKKVVIAGGGDSAVDWANHLDGVAESVTLIHRRDAFRAHEHSVELLYQSSVNVMTPYVPLEIKGENGHAQSLTVQRVKSDEVVELPIDALIVSFGFSTNNKNLRNWNVDYKRSSITVNAQFETSQEGVYAIGGAAEYDGKIDLIAVGMGEAPIAINQAIQYIEPDGKNRPVHSTSLIEE</sequence>
<accession>Q03JS2</accession>
<proteinExistence type="inferred from homology"/>
<feature type="chain" id="PRO_0000364977" description="Ferredoxin--NADP reductase">
    <location>
        <begin position="1"/>
        <end position="332"/>
    </location>
</feature>
<feature type="binding site" evidence="1">
    <location>
        <position position="36"/>
    </location>
    <ligand>
        <name>FAD</name>
        <dbReference type="ChEBI" id="CHEBI:57692"/>
    </ligand>
</feature>
<feature type="binding site" evidence="1">
    <location>
        <position position="44"/>
    </location>
    <ligand>
        <name>FAD</name>
        <dbReference type="ChEBI" id="CHEBI:57692"/>
    </ligand>
</feature>
<feature type="binding site" evidence="1">
    <location>
        <position position="49"/>
    </location>
    <ligand>
        <name>FAD</name>
        <dbReference type="ChEBI" id="CHEBI:57692"/>
    </ligand>
</feature>
<feature type="binding site" evidence="1">
    <location>
        <position position="91"/>
    </location>
    <ligand>
        <name>FAD</name>
        <dbReference type="ChEBI" id="CHEBI:57692"/>
    </ligand>
</feature>
<feature type="binding site" evidence="1">
    <location>
        <position position="124"/>
    </location>
    <ligand>
        <name>FAD</name>
        <dbReference type="ChEBI" id="CHEBI:57692"/>
    </ligand>
</feature>
<feature type="binding site" evidence="1">
    <location>
        <position position="327"/>
    </location>
    <ligand>
        <name>FAD</name>
        <dbReference type="ChEBI" id="CHEBI:57692"/>
    </ligand>
</feature>
<organism>
    <name type="scientific">Streptococcus thermophilus (strain ATCC BAA-491 / LMD-9)</name>
    <dbReference type="NCBI Taxonomy" id="322159"/>
    <lineage>
        <taxon>Bacteria</taxon>
        <taxon>Bacillati</taxon>
        <taxon>Bacillota</taxon>
        <taxon>Bacilli</taxon>
        <taxon>Lactobacillales</taxon>
        <taxon>Streptococcaceae</taxon>
        <taxon>Streptococcus</taxon>
    </lineage>
</organism>